<organism>
    <name type="scientific">Mus musculus</name>
    <name type="common">Mouse</name>
    <dbReference type="NCBI Taxonomy" id="10090"/>
    <lineage>
        <taxon>Eukaryota</taxon>
        <taxon>Metazoa</taxon>
        <taxon>Chordata</taxon>
        <taxon>Craniata</taxon>
        <taxon>Vertebrata</taxon>
        <taxon>Euteleostomi</taxon>
        <taxon>Mammalia</taxon>
        <taxon>Eutheria</taxon>
        <taxon>Euarchontoglires</taxon>
        <taxon>Glires</taxon>
        <taxon>Rodentia</taxon>
        <taxon>Myomorpha</taxon>
        <taxon>Muroidea</taxon>
        <taxon>Muridae</taxon>
        <taxon>Murinae</taxon>
        <taxon>Mus</taxon>
        <taxon>Mus</taxon>
    </lineage>
</organism>
<dbReference type="EMBL" id="AK043942">
    <property type="protein sequence ID" value="BAC31708.1"/>
    <property type="molecule type" value="mRNA"/>
</dbReference>
<dbReference type="EMBL" id="AK047847">
    <property type="protein sequence ID" value="BAC33174.1"/>
    <property type="molecule type" value="mRNA"/>
</dbReference>
<dbReference type="EMBL" id="AK083014">
    <property type="protein sequence ID" value="BAC38730.1"/>
    <property type="molecule type" value="mRNA"/>
</dbReference>
<dbReference type="EMBL" id="BC145953">
    <property type="protein sequence ID" value="AAI45954.1"/>
    <property type="molecule type" value="mRNA"/>
</dbReference>
<dbReference type="EMBL" id="BC145955">
    <property type="protein sequence ID" value="AAI45956.1"/>
    <property type="molecule type" value="mRNA"/>
</dbReference>
<dbReference type="EMBL" id="U56651">
    <property type="protein sequence ID" value="AAB18764.1"/>
    <property type="molecule type" value="Genomic_DNA"/>
</dbReference>
<dbReference type="CCDS" id="CCDS39426.1"/>
<dbReference type="RefSeq" id="NP_032777.3">
    <property type="nucleotide sequence ID" value="NM_008751.5"/>
</dbReference>
<dbReference type="RefSeq" id="XP_006505073.1">
    <property type="nucleotide sequence ID" value="XM_006505010.5"/>
</dbReference>
<dbReference type="SMR" id="Q61200"/>
<dbReference type="BioGRID" id="201884">
    <property type="interactions" value="1"/>
</dbReference>
<dbReference type="FunCoup" id="Q61200">
    <property type="interactions" value="121"/>
</dbReference>
<dbReference type="STRING" id="10090.ENSMUSP00000125274"/>
<dbReference type="GlyConnect" id="2542">
    <property type="glycosylation" value="3 N-Linked glycans (3 sites)"/>
</dbReference>
<dbReference type="GlyCosmos" id="Q61200">
    <property type="glycosylation" value="6 sites, 3 glycans"/>
</dbReference>
<dbReference type="GlyGen" id="Q61200">
    <property type="glycosylation" value="6 sites, 7 N-linked glycans (5 sites)"/>
</dbReference>
<dbReference type="iPTMnet" id="Q61200"/>
<dbReference type="PhosphoSitePlus" id="Q61200"/>
<dbReference type="PaxDb" id="10090-ENSMUSP00000125274"/>
<dbReference type="ProteomicsDB" id="293912"/>
<dbReference type="Antibodypedia" id="43889">
    <property type="antibodies" value="242 antibodies from 33 providers"/>
</dbReference>
<dbReference type="DNASU" id="18231"/>
<dbReference type="Ensembl" id="ENSMUST00000060369.4">
    <property type="protein sequence ID" value="ENSMUSP00000060926.4"/>
    <property type="gene ID" value="ENSMUSG00000046178.4"/>
</dbReference>
<dbReference type="Ensembl" id="ENSMUST00000160300.2">
    <property type="protein sequence ID" value="ENSMUSP00000125274.2"/>
    <property type="gene ID" value="ENSMUSG00000046178.4"/>
</dbReference>
<dbReference type="GeneID" id="18231"/>
<dbReference type="KEGG" id="mmu:18231"/>
<dbReference type="UCSC" id="uc009ayb.1">
    <property type="organism name" value="mouse"/>
</dbReference>
<dbReference type="AGR" id="MGI:107492"/>
<dbReference type="CTD" id="30010"/>
<dbReference type="MGI" id="MGI:107492">
    <property type="gene designation" value="Nxph1"/>
</dbReference>
<dbReference type="VEuPathDB" id="HostDB:ENSMUSG00000046178"/>
<dbReference type="eggNOG" id="ENOG502QQUX">
    <property type="taxonomic scope" value="Eukaryota"/>
</dbReference>
<dbReference type="GeneTree" id="ENSGT00950000182883"/>
<dbReference type="HOGENOM" id="CLU_067114_1_0_1"/>
<dbReference type="InParanoid" id="Q61200"/>
<dbReference type="OMA" id="FCFQVTC"/>
<dbReference type="OrthoDB" id="8690369at2759"/>
<dbReference type="PhylomeDB" id="Q61200"/>
<dbReference type="TreeFam" id="TF333047"/>
<dbReference type="BioGRID-ORCS" id="18231">
    <property type="hits" value="3 hits in 79 CRISPR screens"/>
</dbReference>
<dbReference type="ChiTaRS" id="Nxph1">
    <property type="organism name" value="mouse"/>
</dbReference>
<dbReference type="PRO" id="PR:Q61200"/>
<dbReference type="Proteomes" id="UP000000589">
    <property type="component" value="Chromosome 6"/>
</dbReference>
<dbReference type="RNAct" id="Q61200">
    <property type="molecule type" value="protein"/>
</dbReference>
<dbReference type="Bgee" id="ENSMUSG00000046178">
    <property type="expression patterns" value="Expressed in lateral septal nucleus and 120 other cell types or tissues"/>
</dbReference>
<dbReference type="GO" id="GO:0098982">
    <property type="term" value="C:GABA-ergic synapse"/>
    <property type="evidence" value="ECO:0000314"/>
    <property type="project" value="SynGO"/>
</dbReference>
<dbReference type="GO" id="GO:0098978">
    <property type="term" value="C:glutamatergic synapse"/>
    <property type="evidence" value="ECO:0000314"/>
    <property type="project" value="SynGO"/>
</dbReference>
<dbReference type="GO" id="GO:0043083">
    <property type="term" value="C:synaptic cleft"/>
    <property type="evidence" value="ECO:0000314"/>
    <property type="project" value="SynGO"/>
</dbReference>
<dbReference type="GO" id="GO:0005102">
    <property type="term" value="F:signaling receptor binding"/>
    <property type="evidence" value="ECO:0000314"/>
    <property type="project" value="MGI"/>
</dbReference>
<dbReference type="GO" id="GO:0050804">
    <property type="term" value="P:modulation of chemical synaptic transmission"/>
    <property type="evidence" value="ECO:0000314"/>
    <property type="project" value="SynGO"/>
</dbReference>
<dbReference type="InterPro" id="IPR010450">
    <property type="entry name" value="Nxph"/>
</dbReference>
<dbReference type="InterPro" id="IPR026845">
    <property type="entry name" value="NXPH/NXPE"/>
</dbReference>
<dbReference type="PANTHER" id="PTHR17103">
    <property type="entry name" value="NEUREXOPHILIN"/>
    <property type="match status" value="1"/>
</dbReference>
<dbReference type="PANTHER" id="PTHR17103:SF13">
    <property type="entry name" value="NEUREXOPHILIN-1"/>
    <property type="match status" value="1"/>
</dbReference>
<dbReference type="Pfam" id="PF06312">
    <property type="entry name" value="Neurexophilin"/>
    <property type="match status" value="1"/>
</dbReference>
<dbReference type="PIRSF" id="PIRSF038019">
    <property type="entry name" value="Neurexophilin"/>
    <property type="match status" value="1"/>
</dbReference>
<comment type="function">
    <text>May be signaling molecules that resemble neuropeptides. Ligand for alpha-neurexins.</text>
</comment>
<comment type="subcellular location">
    <subcellularLocation>
        <location evidence="2">Secreted</location>
    </subcellularLocation>
</comment>
<comment type="tissue specificity">
    <text>Brain, only in a scattered subpopulation of neurons that probably represent inhibitory interneurons.</text>
</comment>
<comment type="PTM">
    <text>May be proteolytically processed at the boundary between the N-terminal non-conserved and the central conserved domain in neuron-like cells.</text>
</comment>
<comment type="similarity">
    <text evidence="2">Belongs to the neurexophilin family.</text>
</comment>
<gene>
    <name type="primary">Nxph1</name>
    <name type="synonym">Nph1</name>
</gene>
<sequence length="271" mass="31048">MQAACWYVLLLLQPTVYLVTCANLTNGGKSELLKSGSSKSTLKHIWTESSKDLSISRLLSQTFRGKENDTDLDLRYDTPEPYSEQDLWDWLRNSTDLQEPRPRAKRRPIVKTGKFKKMFGWGDFHSNIKTVKLNLLITGKIVDHGNGTFSVYFRHNSTGQGNVSVSLVPPTKIVEFDLAQQTVIDAKDSKSFNCRIEYEKVDKATKNTLCNYDPSKTCYQEQTQSHVSWLCSKPFKVICIYISFYSTDYKLVQKVCPDYNYHSDTPYFPSG</sequence>
<keyword id="KW-0325">Glycoprotein</keyword>
<keyword id="KW-1185">Reference proteome</keyword>
<keyword id="KW-0964">Secreted</keyword>
<keyword id="KW-0732">Signal</keyword>
<name>NXPH1_MOUSE</name>
<protein>
    <recommendedName>
        <fullName>Neurexophilin-1</fullName>
    </recommendedName>
</protein>
<proteinExistence type="evidence at transcript level"/>
<evidence type="ECO:0000255" key="1"/>
<evidence type="ECO:0000305" key="2"/>
<reference key="1">
    <citation type="journal article" date="2005" name="Science">
        <title>The transcriptional landscape of the mammalian genome.</title>
        <authorList>
            <person name="Carninci P."/>
            <person name="Kasukawa T."/>
            <person name="Katayama S."/>
            <person name="Gough J."/>
            <person name="Frith M.C."/>
            <person name="Maeda N."/>
            <person name="Oyama R."/>
            <person name="Ravasi T."/>
            <person name="Lenhard B."/>
            <person name="Wells C."/>
            <person name="Kodzius R."/>
            <person name="Shimokawa K."/>
            <person name="Bajic V.B."/>
            <person name="Brenner S.E."/>
            <person name="Batalov S."/>
            <person name="Forrest A.R."/>
            <person name="Zavolan M."/>
            <person name="Davis M.J."/>
            <person name="Wilming L.G."/>
            <person name="Aidinis V."/>
            <person name="Allen J.E."/>
            <person name="Ambesi-Impiombato A."/>
            <person name="Apweiler R."/>
            <person name="Aturaliya R.N."/>
            <person name="Bailey T.L."/>
            <person name="Bansal M."/>
            <person name="Baxter L."/>
            <person name="Beisel K.W."/>
            <person name="Bersano T."/>
            <person name="Bono H."/>
            <person name="Chalk A.M."/>
            <person name="Chiu K.P."/>
            <person name="Choudhary V."/>
            <person name="Christoffels A."/>
            <person name="Clutterbuck D.R."/>
            <person name="Crowe M.L."/>
            <person name="Dalla E."/>
            <person name="Dalrymple B.P."/>
            <person name="de Bono B."/>
            <person name="Della Gatta G."/>
            <person name="di Bernardo D."/>
            <person name="Down T."/>
            <person name="Engstrom P."/>
            <person name="Fagiolini M."/>
            <person name="Faulkner G."/>
            <person name="Fletcher C.F."/>
            <person name="Fukushima T."/>
            <person name="Furuno M."/>
            <person name="Futaki S."/>
            <person name="Gariboldi M."/>
            <person name="Georgii-Hemming P."/>
            <person name="Gingeras T.R."/>
            <person name="Gojobori T."/>
            <person name="Green R.E."/>
            <person name="Gustincich S."/>
            <person name="Harbers M."/>
            <person name="Hayashi Y."/>
            <person name="Hensch T.K."/>
            <person name="Hirokawa N."/>
            <person name="Hill D."/>
            <person name="Huminiecki L."/>
            <person name="Iacono M."/>
            <person name="Ikeo K."/>
            <person name="Iwama A."/>
            <person name="Ishikawa T."/>
            <person name="Jakt M."/>
            <person name="Kanapin A."/>
            <person name="Katoh M."/>
            <person name="Kawasawa Y."/>
            <person name="Kelso J."/>
            <person name="Kitamura H."/>
            <person name="Kitano H."/>
            <person name="Kollias G."/>
            <person name="Krishnan S.P."/>
            <person name="Kruger A."/>
            <person name="Kummerfeld S.K."/>
            <person name="Kurochkin I.V."/>
            <person name="Lareau L.F."/>
            <person name="Lazarevic D."/>
            <person name="Lipovich L."/>
            <person name="Liu J."/>
            <person name="Liuni S."/>
            <person name="McWilliam S."/>
            <person name="Madan Babu M."/>
            <person name="Madera M."/>
            <person name="Marchionni L."/>
            <person name="Matsuda H."/>
            <person name="Matsuzawa S."/>
            <person name="Miki H."/>
            <person name="Mignone F."/>
            <person name="Miyake S."/>
            <person name="Morris K."/>
            <person name="Mottagui-Tabar S."/>
            <person name="Mulder N."/>
            <person name="Nakano N."/>
            <person name="Nakauchi H."/>
            <person name="Ng P."/>
            <person name="Nilsson R."/>
            <person name="Nishiguchi S."/>
            <person name="Nishikawa S."/>
            <person name="Nori F."/>
            <person name="Ohara O."/>
            <person name="Okazaki Y."/>
            <person name="Orlando V."/>
            <person name="Pang K.C."/>
            <person name="Pavan W.J."/>
            <person name="Pavesi G."/>
            <person name="Pesole G."/>
            <person name="Petrovsky N."/>
            <person name="Piazza S."/>
            <person name="Reed J."/>
            <person name="Reid J.F."/>
            <person name="Ring B.Z."/>
            <person name="Ringwald M."/>
            <person name="Rost B."/>
            <person name="Ruan Y."/>
            <person name="Salzberg S.L."/>
            <person name="Sandelin A."/>
            <person name="Schneider C."/>
            <person name="Schoenbach C."/>
            <person name="Sekiguchi K."/>
            <person name="Semple C.A."/>
            <person name="Seno S."/>
            <person name="Sessa L."/>
            <person name="Sheng Y."/>
            <person name="Shibata Y."/>
            <person name="Shimada H."/>
            <person name="Shimada K."/>
            <person name="Silva D."/>
            <person name="Sinclair B."/>
            <person name="Sperling S."/>
            <person name="Stupka E."/>
            <person name="Sugiura K."/>
            <person name="Sultana R."/>
            <person name="Takenaka Y."/>
            <person name="Taki K."/>
            <person name="Tammoja K."/>
            <person name="Tan S.L."/>
            <person name="Tang S."/>
            <person name="Taylor M.S."/>
            <person name="Tegner J."/>
            <person name="Teichmann S.A."/>
            <person name="Ueda H.R."/>
            <person name="van Nimwegen E."/>
            <person name="Verardo R."/>
            <person name="Wei C.L."/>
            <person name="Yagi K."/>
            <person name="Yamanishi H."/>
            <person name="Zabarovsky E."/>
            <person name="Zhu S."/>
            <person name="Zimmer A."/>
            <person name="Hide W."/>
            <person name="Bult C."/>
            <person name="Grimmond S.M."/>
            <person name="Teasdale R.D."/>
            <person name="Liu E.T."/>
            <person name="Brusic V."/>
            <person name="Quackenbush J."/>
            <person name="Wahlestedt C."/>
            <person name="Mattick J.S."/>
            <person name="Hume D.A."/>
            <person name="Kai C."/>
            <person name="Sasaki D."/>
            <person name="Tomaru Y."/>
            <person name="Fukuda S."/>
            <person name="Kanamori-Katayama M."/>
            <person name="Suzuki M."/>
            <person name="Aoki J."/>
            <person name="Arakawa T."/>
            <person name="Iida J."/>
            <person name="Imamura K."/>
            <person name="Itoh M."/>
            <person name="Kato T."/>
            <person name="Kawaji H."/>
            <person name="Kawagashira N."/>
            <person name="Kawashima T."/>
            <person name="Kojima M."/>
            <person name="Kondo S."/>
            <person name="Konno H."/>
            <person name="Nakano K."/>
            <person name="Ninomiya N."/>
            <person name="Nishio T."/>
            <person name="Okada M."/>
            <person name="Plessy C."/>
            <person name="Shibata K."/>
            <person name="Shiraki T."/>
            <person name="Suzuki S."/>
            <person name="Tagami M."/>
            <person name="Waki K."/>
            <person name="Watahiki A."/>
            <person name="Okamura-Oho Y."/>
            <person name="Suzuki H."/>
            <person name="Kawai J."/>
            <person name="Hayashizaki Y."/>
        </authorList>
    </citation>
    <scope>NUCLEOTIDE SEQUENCE [LARGE SCALE MRNA]</scope>
    <source>
        <strain>C57BL/6J</strain>
        <tissue>Brain cortex</tissue>
        <tissue>Head</tissue>
        <tissue>Spinal cord</tissue>
    </source>
</reference>
<reference key="2">
    <citation type="journal article" date="2004" name="Genome Res.">
        <title>The status, quality, and expansion of the NIH full-length cDNA project: the Mammalian Gene Collection (MGC).</title>
        <authorList>
            <consortium name="The MGC Project Team"/>
        </authorList>
    </citation>
    <scope>NUCLEOTIDE SEQUENCE [LARGE SCALE MRNA]</scope>
    <source>
        <tissue>Brain</tissue>
    </source>
</reference>
<reference key="3">
    <citation type="journal article" date="1996" name="J. Neurosci.">
        <title>Structure and evolution of neurexophilin.</title>
        <authorList>
            <person name="Petrenko A.G."/>
            <person name="Ullrich B."/>
            <person name="Missler M."/>
            <person name="Krasnoperov V."/>
            <person name="Rosahl T.W."/>
            <person name="Suedhof T.C."/>
        </authorList>
    </citation>
    <scope>NUCLEOTIDE SEQUENCE [GENOMIC DNA] OF 19-271</scope>
    <source>
        <strain>129/Sv</strain>
    </source>
</reference>
<feature type="signal peptide" evidence="1">
    <location>
        <begin position="1"/>
        <end position="21"/>
    </location>
</feature>
<feature type="chain" id="PRO_0000020060" description="Neurexophilin-1">
    <location>
        <begin position="22"/>
        <end position="271"/>
    </location>
</feature>
<feature type="region of interest" description="II">
    <location>
        <begin position="22"/>
        <end position="97"/>
    </location>
</feature>
<feature type="region of interest" description="III">
    <location>
        <begin position="98"/>
        <end position="176"/>
    </location>
</feature>
<feature type="region of interest" description="IV (linker domain)">
    <location>
        <begin position="177"/>
        <end position="185"/>
    </location>
</feature>
<feature type="region of interest" description="V (Cys-rich)">
    <location>
        <begin position="186"/>
        <end position="271"/>
    </location>
</feature>
<feature type="glycosylation site" description="N-linked (GlcNAc...) asparagine" evidence="1">
    <location>
        <position position="23"/>
    </location>
</feature>
<feature type="glycosylation site" description="N-linked (GlcNAc...) asparagine" evidence="1">
    <location>
        <position position="68"/>
    </location>
</feature>
<feature type="glycosylation site" description="N-linked (GlcNAc...) asparagine" evidence="1">
    <location>
        <position position="93"/>
    </location>
</feature>
<feature type="glycosylation site" description="N-linked (GlcNAc...) asparagine" evidence="1">
    <location>
        <position position="146"/>
    </location>
</feature>
<feature type="glycosylation site" description="N-linked (GlcNAc...) asparagine" evidence="1">
    <location>
        <position position="156"/>
    </location>
</feature>
<feature type="glycosylation site" description="N-linked (GlcNAc...) asparagine" evidence="1">
    <location>
        <position position="162"/>
    </location>
</feature>
<feature type="sequence conflict" description="In Ref. 1; BAC31708." evidence="2" ref="1">
    <original>T</original>
    <variation>N</variation>
    <location>
        <position position="148"/>
    </location>
</feature>
<accession>Q61200</accession>
<accession>A6H6P7</accession>
<accession>Q8BHJ2</accession>
<accession>Q8BLP4</accession>